<keyword id="KW-0119">Carbohydrate metabolism</keyword>
<keyword id="KW-0963">Cytoplasm</keyword>
<keyword id="KW-0903">Direct protein sequencing</keyword>
<keyword id="KW-0326">Glycosidase</keyword>
<keyword id="KW-0378">Hydrolase</keyword>
<feature type="initiator methionine" description="Removed" evidence="2">
    <location>
        <position position="1"/>
    </location>
</feature>
<feature type="chain" id="PRO_0000184571" description="Alpha-amylase 1">
    <location>
        <begin position="2"/>
        <end position="686"/>
    </location>
</feature>
<feature type="active site" description="Nucleophile" evidence="1">
    <location>
        <position position="125"/>
    </location>
</feature>
<feature type="active site" description="Proton donor" evidence="1">
    <location>
        <position position="216"/>
    </location>
</feature>
<accession>P09961</accession>
<accession>B5YDK4</accession>
<evidence type="ECO:0000250" key="1"/>
<evidence type="ECO:0000269" key="2">
    <source>
    </source>
</evidence>
<evidence type="ECO:0000305" key="3"/>
<protein>
    <recommendedName>
        <fullName>Alpha-amylase 1</fullName>
        <ecNumber>3.2.1.1</ecNumber>
    </recommendedName>
    <alternativeName>
        <fullName>1,4-alpha-D-glucan glucanohydrolase</fullName>
    </alternativeName>
</protein>
<name>AMY1_DICT6</name>
<comment type="function">
    <text>This amylase is a highly liquefying-type: oligomers appeared at the beginning of incubation, followed by a graded decrease in the amounts of maltotriose, maltose and glucose in prolonged incubation.</text>
</comment>
<comment type="catalytic activity">
    <reaction>
        <text>Endohydrolysis of (1-&gt;4)-alpha-D-glucosidic linkages in polysaccharides containing three or more (1-&gt;4)-alpha-linked D-glucose units.</text>
        <dbReference type="EC" id="3.2.1.1"/>
    </reaction>
</comment>
<comment type="biophysicochemical properties">
    <phDependence>
        <text>Optimum pH is 5.5. Stable above pH 5.5.</text>
    </phDependence>
    <temperatureDependence>
        <text>Optimum temperature is about 90 degrees Celsius. Highly thermostable. Retains 70% of its maximal activity after heating 1 hour at 90 degrees Celsius, but no decrease in activity was observed within the same time at 80 degrees Celsius.</text>
    </temperatureDependence>
</comment>
<comment type="subcellular location">
    <subcellularLocation>
        <location>Cytoplasm</location>
    </subcellularLocation>
</comment>
<comment type="similarity">
    <text evidence="3">Belongs to the glycosyl hydrolase 57 family.</text>
</comment>
<gene>
    <name type="primary">amyA</name>
    <name type="ordered locus">DICTH_0745</name>
</gene>
<organism>
    <name type="scientific">Dictyoglomus thermophilum (strain ATCC 35947 / DSM 3960 / H-6-12)</name>
    <dbReference type="NCBI Taxonomy" id="309799"/>
    <lineage>
        <taxon>Bacteria</taxon>
        <taxon>Pseudomonadati</taxon>
        <taxon>Dictyoglomota</taxon>
        <taxon>Dictyoglomia</taxon>
        <taxon>Dictyoglomales</taxon>
        <taxon>Dictyoglomaceae</taxon>
        <taxon>Dictyoglomus</taxon>
    </lineage>
</organism>
<sequence length="686" mass="81192">MTKSIYFSLGIHNHQPVGNFDFVIERAYEMSYKPLINFFFKHPDFPINVHFSGFLLLWLEKNHPEYFEKLKIMAERGQIEFVSGGFYEPILPIIPDKDKVQQIKKLNKYIYDKFGQTPKGMWLAERVWEPHLVKYIAEAGIEYVVVDDAHFFSVGLKEEDLFGYYLMEEQGYKLAVFPISMKLRYLIPFADPEETITYLDKFASEDKSKIALLFDDGEKFGLWPDTYRTVYEEGWLETFVSKIKENFLLVTPVNLYTYMQRVKPKGRIYLPTASYREMMEWVLFPEAQKELEELVEKLKTENLWDKFSPYVKGGFWRNFLAKYDESNHMQKKMLYVWKKVQDSPNEEVKEKAMEEVFQGQANDAYWHGIFGGLYLPHLRTAIYEHLIKAENYLENSEIRFNIFDFDCDGNDEIIVESPFFNLYLSPNHGGSVLEWDFKTKAFNLTNVLTRRKEAYHSKLSYVTSEAQGKSIHERWTAKEEGLENILFYDNHRRVSFTEKIFESEPVLEDLWKDSSRLEVDSFYENYDYEINKDENKIRVLFSGVFRGFELCKSYILYKDKSFVDVVYEIKNVSETPISLNFGWEINLNFLAPNHPDYYFLIGDQKYPLSSFGIEKVNNWKIFSGIGIELECVLDVEASLYRYPIETVSLSEEGFERVYQGSALIHFYKVDLPVGSTWRTTIRFWVK</sequence>
<reference key="1">
    <citation type="journal article" date="1988" name="Eur. J. Biochem.">
        <title>Cloning and nucleotide sequence of a heat-stable amylase gene from an anaerobic thermophile, Dictyoglomus thermophilum.</title>
        <authorList>
            <person name="Fukusumi S."/>
            <person name="Kamizono A."/>
            <person name="Horinouchi S."/>
            <person name="Beppu T."/>
        </authorList>
    </citation>
    <scope>NUCLEOTIDE SEQUENCE [GENOMIC DNA]</scope>
    <scope>PROTEIN SEQUENCE OF 2-13</scope>
</reference>
<reference key="2">
    <citation type="journal article" date="2014" name="Genome Announc.">
        <title>Complete Genome Sequence of the Extreme Thermophile Dictyoglomus thermophilum H-6-12.</title>
        <authorList>
            <person name="Coil D.A."/>
            <person name="Badger J.H."/>
            <person name="Forberger H.C."/>
            <person name="Riggs F."/>
            <person name="Madupu R."/>
            <person name="Fedorova N."/>
            <person name="Ward N."/>
            <person name="Robb F.T."/>
            <person name="Eisen J.A."/>
        </authorList>
    </citation>
    <scope>NUCLEOTIDE SEQUENCE [LARGE SCALE GENOMIC DNA]</scope>
    <source>
        <strain>ATCC 35947 / DSM 3960 / H-6-12</strain>
    </source>
</reference>
<proteinExistence type="evidence at protein level"/>
<dbReference type="EC" id="3.2.1.1"/>
<dbReference type="EMBL" id="X07896">
    <property type="protein sequence ID" value="CAA30735.1"/>
    <property type="molecule type" value="Genomic_DNA"/>
</dbReference>
<dbReference type="EMBL" id="CP001146">
    <property type="protein sequence ID" value="ACI18637.1"/>
    <property type="molecule type" value="Genomic_DNA"/>
</dbReference>
<dbReference type="PIR" id="S00628">
    <property type="entry name" value="ALDYAT"/>
</dbReference>
<dbReference type="RefSeq" id="WP_012547269.1">
    <property type="nucleotide sequence ID" value="NC_011297.1"/>
</dbReference>
<dbReference type="SMR" id="P09961"/>
<dbReference type="STRING" id="309799.DICTH_0745"/>
<dbReference type="CAZy" id="GH57">
    <property type="family name" value="Glycoside Hydrolase Family 57"/>
</dbReference>
<dbReference type="PaxDb" id="309799-DICTH_0745"/>
<dbReference type="KEGG" id="dth:DICTH_0745"/>
<dbReference type="eggNOG" id="COG1449">
    <property type="taxonomic scope" value="Bacteria"/>
</dbReference>
<dbReference type="HOGENOM" id="CLU_026700_0_0_0"/>
<dbReference type="OrthoDB" id="9757977at2"/>
<dbReference type="Proteomes" id="UP000001733">
    <property type="component" value="Chromosome"/>
</dbReference>
<dbReference type="GO" id="GO:0005737">
    <property type="term" value="C:cytoplasm"/>
    <property type="evidence" value="ECO:0007669"/>
    <property type="project" value="UniProtKB-SubCell"/>
</dbReference>
<dbReference type="GO" id="GO:0004556">
    <property type="term" value="F:alpha-amylase activity"/>
    <property type="evidence" value="ECO:0007669"/>
    <property type="project" value="UniProtKB-EC"/>
</dbReference>
<dbReference type="GO" id="GO:0030246">
    <property type="term" value="F:carbohydrate binding"/>
    <property type="evidence" value="ECO:0007669"/>
    <property type="project" value="InterPro"/>
</dbReference>
<dbReference type="GO" id="GO:0005975">
    <property type="term" value="P:carbohydrate metabolic process"/>
    <property type="evidence" value="ECO:0007669"/>
    <property type="project" value="InterPro"/>
</dbReference>
<dbReference type="CDD" id="cd10793">
    <property type="entry name" value="GH57N_TLGT_like"/>
    <property type="match status" value="1"/>
</dbReference>
<dbReference type="Gene3D" id="2.70.98.10">
    <property type="match status" value="1"/>
</dbReference>
<dbReference type="Gene3D" id="3.20.110.20">
    <property type="match status" value="1"/>
</dbReference>
<dbReference type="InterPro" id="IPR015179">
    <property type="entry name" value="A-amylase/a-glucTrfase_C"/>
</dbReference>
<dbReference type="InterPro" id="IPR015178">
    <property type="entry name" value="A-amylase/a-glucTrfase_central"/>
</dbReference>
<dbReference type="InterPro" id="IPR011013">
    <property type="entry name" value="Gal_mutarotase_sf_dom"/>
</dbReference>
<dbReference type="InterPro" id="IPR014718">
    <property type="entry name" value="GH-type_carb-bd"/>
</dbReference>
<dbReference type="InterPro" id="IPR052046">
    <property type="entry name" value="GH57_Enzymes"/>
</dbReference>
<dbReference type="InterPro" id="IPR011330">
    <property type="entry name" value="Glyco_hydro/deAcase_b/a-brl"/>
</dbReference>
<dbReference type="InterPro" id="IPR028995">
    <property type="entry name" value="Glyco_hydro_57/38_cen_sf"/>
</dbReference>
<dbReference type="InterPro" id="IPR004300">
    <property type="entry name" value="Glyco_hydro_57_N"/>
</dbReference>
<dbReference type="PANTHER" id="PTHR36306:SF1">
    <property type="entry name" value="ALPHA-AMYLASE-RELATED"/>
    <property type="match status" value="1"/>
</dbReference>
<dbReference type="PANTHER" id="PTHR36306">
    <property type="entry name" value="ALPHA-AMYLASE-RELATED-RELATED"/>
    <property type="match status" value="1"/>
</dbReference>
<dbReference type="Pfam" id="PF09094">
    <property type="entry name" value="AmyA-A_glucT_m"/>
    <property type="match status" value="1"/>
</dbReference>
<dbReference type="Pfam" id="PF09095">
    <property type="entry name" value="AmyA-gluTrfs_C"/>
    <property type="match status" value="1"/>
</dbReference>
<dbReference type="Pfam" id="PF03065">
    <property type="entry name" value="Glyco_hydro_57"/>
    <property type="match status" value="1"/>
</dbReference>
<dbReference type="SUPFAM" id="SSF88688">
    <property type="entry name" value="Families 57/38 glycoside transferase middle domain"/>
    <property type="match status" value="1"/>
</dbReference>
<dbReference type="SUPFAM" id="SSF74650">
    <property type="entry name" value="Galactose mutarotase-like"/>
    <property type="match status" value="1"/>
</dbReference>
<dbReference type="SUPFAM" id="SSF88713">
    <property type="entry name" value="Glycoside hydrolase/deacetylase"/>
    <property type="match status" value="1"/>
</dbReference>